<feature type="chain" id="PRO_0000433046" description="Calmodulin-binding protein 60 B">
    <location>
        <begin position="1"/>
        <end position="647"/>
    </location>
</feature>
<feature type="region of interest" description="Disordered" evidence="4">
    <location>
        <begin position="1"/>
        <end position="26"/>
    </location>
</feature>
<feature type="region of interest" description="Calmodulin-binding" evidence="1">
    <location>
        <begin position="8"/>
        <end position="85"/>
    </location>
</feature>
<feature type="region of interest" description="DNA-binding" evidence="1">
    <location>
        <begin position="155"/>
        <end position="278"/>
    </location>
</feature>
<feature type="short sequence motif" description="Nuclear localization signal" evidence="3">
    <location>
        <begin position="12"/>
        <end position="19"/>
    </location>
</feature>
<feature type="compositionally biased region" description="Polar residues" evidence="4">
    <location>
        <begin position="1"/>
        <end position="10"/>
    </location>
</feature>
<reference key="1">
    <citation type="journal article" date="1998" name="DNA Res.">
        <title>Structural analysis of Arabidopsis thaliana chromosome 5. V. Sequence features of the regions of 1,381,565 bp covered by twenty one physically assigned P1 and TAC clones.</title>
        <authorList>
            <person name="Kaneko T."/>
            <person name="Kotani H."/>
            <person name="Nakamura Y."/>
            <person name="Sato S."/>
            <person name="Asamizu E."/>
            <person name="Miyajima N."/>
            <person name="Tabata S."/>
        </authorList>
    </citation>
    <scope>NUCLEOTIDE SEQUENCE [LARGE SCALE GENOMIC DNA]</scope>
    <source>
        <strain>cv. Columbia</strain>
    </source>
</reference>
<reference key="2">
    <citation type="journal article" date="2017" name="Plant J.">
        <title>Araport11: a complete reannotation of the Arabidopsis thaliana reference genome.</title>
        <authorList>
            <person name="Cheng C.Y."/>
            <person name="Krishnakumar V."/>
            <person name="Chan A.P."/>
            <person name="Thibaud-Nissen F."/>
            <person name="Schobel S."/>
            <person name="Town C.D."/>
        </authorList>
    </citation>
    <scope>GENOME REANNOTATION</scope>
    <source>
        <strain>cv. Columbia</strain>
    </source>
</reference>
<reference key="3">
    <citation type="journal article" date="2003" name="Science">
        <title>Empirical analysis of transcriptional activity in the Arabidopsis genome.</title>
        <authorList>
            <person name="Yamada K."/>
            <person name="Lim J."/>
            <person name="Dale J.M."/>
            <person name="Chen H."/>
            <person name="Shinn P."/>
            <person name="Palm C.J."/>
            <person name="Southwick A.M."/>
            <person name="Wu H.C."/>
            <person name="Kim C.J."/>
            <person name="Nguyen M."/>
            <person name="Pham P.K."/>
            <person name="Cheuk R.F."/>
            <person name="Karlin-Newmann G."/>
            <person name="Liu S.X."/>
            <person name="Lam B."/>
            <person name="Sakano H."/>
            <person name="Wu T."/>
            <person name="Yu G."/>
            <person name="Miranda M."/>
            <person name="Quach H.L."/>
            <person name="Tripp M."/>
            <person name="Chang C.H."/>
            <person name="Lee J.M."/>
            <person name="Toriumi M.J."/>
            <person name="Chan M.M."/>
            <person name="Tang C.C."/>
            <person name="Onodera C.S."/>
            <person name="Deng J.M."/>
            <person name="Akiyama K."/>
            <person name="Ansari Y."/>
            <person name="Arakawa T."/>
            <person name="Banh J."/>
            <person name="Banno F."/>
            <person name="Bowser L."/>
            <person name="Brooks S.Y."/>
            <person name="Carninci P."/>
            <person name="Chao Q."/>
            <person name="Choy N."/>
            <person name="Enju A."/>
            <person name="Goldsmith A.D."/>
            <person name="Gurjal M."/>
            <person name="Hansen N.F."/>
            <person name="Hayashizaki Y."/>
            <person name="Johnson-Hopson C."/>
            <person name="Hsuan V.W."/>
            <person name="Iida K."/>
            <person name="Karnes M."/>
            <person name="Khan S."/>
            <person name="Koesema E."/>
            <person name="Ishida J."/>
            <person name="Jiang P.X."/>
            <person name="Jones T."/>
            <person name="Kawai J."/>
            <person name="Kamiya A."/>
            <person name="Meyers C."/>
            <person name="Nakajima M."/>
            <person name="Narusaka M."/>
            <person name="Seki M."/>
            <person name="Sakurai T."/>
            <person name="Satou M."/>
            <person name="Tamse R."/>
            <person name="Vaysberg M."/>
            <person name="Wallender E.K."/>
            <person name="Wong C."/>
            <person name="Yamamura Y."/>
            <person name="Yuan S."/>
            <person name="Shinozaki K."/>
            <person name="Davis R.W."/>
            <person name="Theologis A."/>
            <person name="Ecker J.R."/>
        </authorList>
    </citation>
    <scope>NUCLEOTIDE SEQUENCE [LARGE SCALE MRNA]</scope>
    <source>
        <strain>cv. Columbia</strain>
    </source>
</reference>
<reference key="4">
    <citation type="journal article" date="2002" name="J. Biol. Chem.">
        <title>Genes encoding calmodulin-binding proteins in the Arabidopsis genome.</title>
        <authorList>
            <person name="Reddy V.S."/>
            <person name="Ali G.S."/>
            <person name="Reddy A.S.N."/>
        </authorList>
    </citation>
    <scope>TISSUE SPECIFICITY</scope>
    <scope>GENE FAMILY</scope>
    <scope>NOMENCLATURE</scope>
</reference>
<organism evidence="10">
    <name type="scientific">Arabidopsis thaliana</name>
    <name type="common">Mouse-ear cress</name>
    <dbReference type="NCBI Taxonomy" id="3702"/>
    <lineage>
        <taxon>Eukaryota</taxon>
        <taxon>Viridiplantae</taxon>
        <taxon>Streptophyta</taxon>
        <taxon>Embryophyta</taxon>
        <taxon>Tracheophyta</taxon>
        <taxon>Spermatophyta</taxon>
        <taxon>Magnoliopsida</taxon>
        <taxon>eudicotyledons</taxon>
        <taxon>Gunneridae</taxon>
        <taxon>Pentapetalae</taxon>
        <taxon>rosids</taxon>
        <taxon>malvids</taxon>
        <taxon>Brassicales</taxon>
        <taxon>Brassicaceae</taxon>
        <taxon>Camelineae</taxon>
        <taxon>Arabidopsis</taxon>
    </lineage>
</organism>
<sequence length="647" mass="72364">MMDSGNNNMNRAKRNLDGNDDDQPERKRPAFASVIVEALKVDSLQKLCSSLEPILRRVVSEELERALAKLGPARLTGSSGSSPKRIEGPDGRKLQLHFKSRLSLPLFTGGKVEGEQGAVIHVVLIDANTGRAVVYGPEASAKLHIVVLEGDFNTEDDEDWTQEEFESHVVKERSGKRPLLTGEVYVTLKEGVGTLGELVFTDNSSWIRSRKFRLGLRVVSGCCDGMRIREAKTEAFVVKDHRGELYKKHYPPALNDDVWRLDKIGKDGAFHKKLTAEGINTVEDFLRVMVKDSPKLRTILGSGMSNKMWDALVEHAKTCVQSSKLYIYYAEDSRNVGVVFNNIYELSGLISGDQYFSADSLTDSQKVYVEGLVKKAYENWNLVIEYDGKSLLDLKQPQRLSITHTNLENYSTAAIDHPMQMVAGHSSSMPPNQSPVLSDFAIGGYDQTLATRYHSHPQLLNSNPRAQFEVASCSTSQDQFMGNLHQTQSTINNQHMNGLALGPSQSSTSGYQNINPSSVHQADLNHLEDWSNPRERGPDDFFSEEEIRLRSHEMLESEDMQQFLRLFSMGGGGNGSATHLPEDGYTFPSFLHTPMQGYDEDRGRSGRAVVGWLKIKAAMRWGFFIRRKAAERRAQIVELDDDDEDGE</sequence>
<accession>Q9FKL6</accession>
<evidence type="ECO:0000250" key="1">
    <source>
        <dbReference type="UniProtKB" id="F4K2R6"/>
    </source>
</evidence>
<evidence type="ECO:0000250" key="2">
    <source>
        <dbReference type="UniProtKB" id="Q9C9T2"/>
    </source>
</evidence>
<evidence type="ECO:0000255" key="3">
    <source>
        <dbReference type="PROSITE-ProRule" id="PRU00768"/>
    </source>
</evidence>
<evidence type="ECO:0000256" key="4">
    <source>
        <dbReference type="SAM" id="MobiDB-lite"/>
    </source>
</evidence>
<evidence type="ECO:0000269" key="5">
    <source>
    </source>
</evidence>
<evidence type="ECO:0000303" key="6">
    <source>
    </source>
</evidence>
<evidence type="ECO:0000305" key="7"/>
<evidence type="ECO:0000312" key="8">
    <source>
        <dbReference type="Araport" id="AT5G57580"/>
    </source>
</evidence>
<evidence type="ECO:0000312" key="9">
    <source>
        <dbReference type="EMBL" id="BAB08793.1"/>
    </source>
</evidence>
<evidence type="ECO:0000312" key="10">
    <source>
        <dbReference type="Proteomes" id="UP000006548"/>
    </source>
</evidence>
<protein>
    <recommendedName>
        <fullName evidence="6">Calmodulin-binding protein 60 B</fullName>
    </recommendedName>
</protein>
<comment type="function">
    <text evidence="1">Transcription activator that binds DNA in a sequence-specific manner, likely 5'-GAAATTTTGG-3', to promote the expression of target genes.</text>
</comment>
<comment type="subunit">
    <text evidence="1">Interacts with calmodulin (CaM).</text>
</comment>
<comment type="subcellular location">
    <subcellularLocation>
        <location evidence="2">Nucleus</location>
    </subcellularLocation>
</comment>
<comment type="tissue specificity">
    <text evidence="5">Expressed in leaves, stems, flowers, developing seeds and root.</text>
</comment>
<comment type="similarity">
    <text evidence="7">Belongs to the plant ACBP60 protein family.</text>
</comment>
<keyword id="KW-0010">Activator</keyword>
<keyword id="KW-0112">Calmodulin-binding</keyword>
<keyword id="KW-0238">DNA-binding</keyword>
<keyword id="KW-0539">Nucleus</keyword>
<keyword id="KW-1185">Reference proteome</keyword>
<keyword id="KW-0804">Transcription</keyword>
<keyword id="KW-0805">Transcription regulation</keyword>
<gene>
    <name evidence="6" type="primary">CBP60B</name>
    <name evidence="8" type="ordered locus">At5g57580</name>
    <name evidence="9" type="ORF">MUA2.16</name>
</gene>
<dbReference type="EMBL" id="AB011482">
    <property type="protein sequence ID" value="BAB08793.1"/>
    <property type="molecule type" value="Genomic_DNA"/>
</dbReference>
<dbReference type="EMBL" id="CP002688">
    <property type="protein sequence ID" value="AED96923.1"/>
    <property type="molecule type" value="Genomic_DNA"/>
</dbReference>
<dbReference type="EMBL" id="AY056289">
    <property type="protein sequence ID" value="AAL07138.1"/>
    <property type="molecule type" value="mRNA"/>
</dbReference>
<dbReference type="EMBL" id="AY091434">
    <property type="protein sequence ID" value="AAM14373.1"/>
    <property type="molecule type" value="mRNA"/>
</dbReference>
<dbReference type="RefSeq" id="NP_200566.1">
    <property type="nucleotide sequence ID" value="NM_125139.3"/>
</dbReference>
<dbReference type="FunCoup" id="Q9FKL6">
    <property type="interactions" value="1725"/>
</dbReference>
<dbReference type="STRING" id="3702.Q9FKL6"/>
<dbReference type="iPTMnet" id="Q9FKL6"/>
<dbReference type="PaxDb" id="3702-AT5G57580.1"/>
<dbReference type="ProteomicsDB" id="223927"/>
<dbReference type="EnsemblPlants" id="AT5G57580.1">
    <property type="protein sequence ID" value="AT5G57580.1"/>
    <property type="gene ID" value="AT5G57580"/>
</dbReference>
<dbReference type="GeneID" id="835862"/>
<dbReference type="Gramene" id="AT5G57580.1">
    <property type="protein sequence ID" value="AT5G57580.1"/>
    <property type="gene ID" value="AT5G57580"/>
</dbReference>
<dbReference type="KEGG" id="ath:AT5G57580"/>
<dbReference type="Araport" id="AT5G57580"/>
<dbReference type="TAIR" id="AT5G57580"/>
<dbReference type="eggNOG" id="ENOG502QQ42">
    <property type="taxonomic scope" value="Eukaryota"/>
</dbReference>
<dbReference type="HOGENOM" id="CLU_031504_3_0_1"/>
<dbReference type="InParanoid" id="Q9FKL6"/>
<dbReference type="OMA" id="WTNNRDK"/>
<dbReference type="PhylomeDB" id="Q9FKL6"/>
<dbReference type="PRO" id="PR:Q9FKL6"/>
<dbReference type="Proteomes" id="UP000006548">
    <property type="component" value="Chromosome 5"/>
</dbReference>
<dbReference type="ExpressionAtlas" id="Q9FKL6">
    <property type="expression patterns" value="baseline and differential"/>
</dbReference>
<dbReference type="GO" id="GO:0005634">
    <property type="term" value="C:nucleus"/>
    <property type="evidence" value="ECO:0007669"/>
    <property type="project" value="UniProtKB-SubCell"/>
</dbReference>
<dbReference type="GO" id="GO:0005516">
    <property type="term" value="F:calmodulin binding"/>
    <property type="evidence" value="ECO:0007669"/>
    <property type="project" value="UniProtKB-KW"/>
</dbReference>
<dbReference type="GO" id="GO:0003677">
    <property type="term" value="F:DNA binding"/>
    <property type="evidence" value="ECO:0007669"/>
    <property type="project" value="UniProtKB-KW"/>
</dbReference>
<dbReference type="InterPro" id="IPR046829">
    <property type="entry name" value="Calmod_bind_C"/>
</dbReference>
<dbReference type="InterPro" id="IPR046830">
    <property type="entry name" value="Calmod_bind_M"/>
</dbReference>
<dbReference type="InterPro" id="IPR046831">
    <property type="entry name" value="Calmodulin_bind_N"/>
</dbReference>
<dbReference type="InterPro" id="IPR012416">
    <property type="entry name" value="CBP60"/>
</dbReference>
<dbReference type="PANTHER" id="PTHR31713:SF100">
    <property type="entry name" value="CALMODULIN-BINDING PROTEIN 60 B"/>
    <property type="match status" value="1"/>
</dbReference>
<dbReference type="PANTHER" id="PTHR31713">
    <property type="entry name" value="OS02G0177800 PROTEIN"/>
    <property type="match status" value="1"/>
</dbReference>
<dbReference type="Pfam" id="PF20452">
    <property type="entry name" value="Calmod_bind_C"/>
    <property type="match status" value="1"/>
</dbReference>
<dbReference type="Pfam" id="PF20451">
    <property type="entry name" value="Calmod_bind_M"/>
    <property type="match status" value="1"/>
</dbReference>
<dbReference type="Pfam" id="PF07887">
    <property type="entry name" value="Calmodulin_bind"/>
    <property type="match status" value="1"/>
</dbReference>
<proteinExistence type="evidence at transcript level"/>
<name>CB60B_ARATH</name>